<sequence>MAATVKKTGSKKSKRNVPNGVVHIQSTFNNTIVSITDTSGHVISWSSAGASGFKGARKGTPFAAQTAAEAAARRALDQGMRQIEVLVRGPGSGRETAIRALQVAGLEITLIRDVTPLPHNGCRRPKRRRV</sequence>
<comment type="function">
    <text evidence="1">Located on the platform of the 30S subunit, it bridges several disparate RNA helices of the 16S rRNA. Forms part of the Shine-Dalgarno cleft in the 70S ribosome.</text>
</comment>
<comment type="subunit">
    <text evidence="1">Part of the 30S ribosomal subunit. Interacts with proteins S7 and S18. Binds to IF-3.</text>
</comment>
<comment type="similarity">
    <text evidence="1">Belongs to the universal ribosomal protein uS11 family.</text>
</comment>
<protein>
    <recommendedName>
        <fullName evidence="1">Small ribosomal subunit protein uS11</fullName>
    </recommendedName>
    <alternativeName>
        <fullName evidence="2">30S ribosomal protein S11</fullName>
    </alternativeName>
</protein>
<evidence type="ECO:0000255" key="1">
    <source>
        <dbReference type="HAMAP-Rule" id="MF_01310"/>
    </source>
</evidence>
<evidence type="ECO:0000305" key="2"/>
<gene>
    <name evidence="1" type="primary">rpsK</name>
    <name evidence="1" type="synonym">rps11</name>
    <name type="ordered locus">PMT9312_1629</name>
</gene>
<dbReference type="EMBL" id="CP000111">
    <property type="protein sequence ID" value="ABB50689.1"/>
    <property type="molecule type" value="Genomic_DNA"/>
</dbReference>
<dbReference type="RefSeq" id="WP_011377171.1">
    <property type="nucleotide sequence ID" value="NC_007577.1"/>
</dbReference>
<dbReference type="SMR" id="Q318K6"/>
<dbReference type="STRING" id="74546.PMT9312_1629"/>
<dbReference type="KEGG" id="pmi:PMT9312_1629"/>
<dbReference type="eggNOG" id="COG0100">
    <property type="taxonomic scope" value="Bacteria"/>
</dbReference>
<dbReference type="HOGENOM" id="CLU_072439_5_0_3"/>
<dbReference type="OrthoDB" id="9806415at2"/>
<dbReference type="Proteomes" id="UP000002715">
    <property type="component" value="Chromosome"/>
</dbReference>
<dbReference type="GO" id="GO:1990904">
    <property type="term" value="C:ribonucleoprotein complex"/>
    <property type="evidence" value="ECO:0007669"/>
    <property type="project" value="UniProtKB-KW"/>
</dbReference>
<dbReference type="GO" id="GO:0005840">
    <property type="term" value="C:ribosome"/>
    <property type="evidence" value="ECO:0007669"/>
    <property type="project" value="UniProtKB-KW"/>
</dbReference>
<dbReference type="GO" id="GO:0019843">
    <property type="term" value="F:rRNA binding"/>
    <property type="evidence" value="ECO:0007669"/>
    <property type="project" value="UniProtKB-UniRule"/>
</dbReference>
<dbReference type="GO" id="GO:0003735">
    <property type="term" value="F:structural constituent of ribosome"/>
    <property type="evidence" value="ECO:0007669"/>
    <property type="project" value="InterPro"/>
</dbReference>
<dbReference type="GO" id="GO:0006412">
    <property type="term" value="P:translation"/>
    <property type="evidence" value="ECO:0007669"/>
    <property type="project" value="UniProtKB-UniRule"/>
</dbReference>
<dbReference type="FunFam" id="3.30.420.80:FF:000001">
    <property type="entry name" value="30S ribosomal protein S11"/>
    <property type="match status" value="1"/>
</dbReference>
<dbReference type="Gene3D" id="3.30.420.80">
    <property type="entry name" value="Ribosomal protein S11"/>
    <property type="match status" value="1"/>
</dbReference>
<dbReference type="HAMAP" id="MF_01310">
    <property type="entry name" value="Ribosomal_uS11"/>
    <property type="match status" value="1"/>
</dbReference>
<dbReference type="InterPro" id="IPR001971">
    <property type="entry name" value="Ribosomal_uS11"/>
</dbReference>
<dbReference type="InterPro" id="IPR019981">
    <property type="entry name" value="Ribosomal_uS11_bac-type"/>
</dbReference>
<dbReference type="InterPro" id="IPR018102">
    <property type="entry name" value="Ribosomal_uS11_CS"/>
</dbReference>
<dbReference type="InterPro" id="IPR036967">
    <property type="entry name" value="Ribosomal_uS11_sf"/>
</dbReference>
<dbReference type="NCBIfam" id="NF003698">
    <property type="entry name" value="PRK05309.1"/>
    <property type="match status" value="1"/>
</dbReference>
<dbReference type="NCBIfam" id="TIGR03632">
    <property type="entry name" value="uS11_bact"/>
    <property type="match status" value="1"/>
</dbReference>
<dbReference type="PANTHER" id="PTHR11759">
    <property type="entry name" value="40S RIBOSOMAL PROTEIN S14/30S RIBOSOMAL PROTEIN S11"/>
    <property type="match status" value="1"/>
</dbReference>
<dbReference type="Pfam" id="PF00411">
    <property type="entry name" value="Ribosomal_S11"/>
    <property type="match status" value="1"/>
</dbReference>
<dbReference type="PIRSF" id="PIRSF002131">
    <property type="entry name" value="Ribosomal_S11"/>
    <property type="match status" value="1"/>
</dbReference>
<dbReference type="SUPFAM" id="SSF53137">
    <property type="entry name" value="Translational machinery components"/>
    <property type="match status" value="1"/>
</dbReference>
<dbReference type="PROSITE" id="PS00054">
    <property type="entry name" value="RIBOSOMAL_S11"/>
    <property type="match status" value="1"/>
</dbReference>
<organism>
    <name type="scientific">Prochlorococcus marinus (strain MIT 9312)</name>
    <dbReference type="NCBI Taxonomy" id="74546"/>
    <lineage>
        <taxon>Bacteria</taxon>
        <taxon>Bacillati</taxon>
        <taxon>Cyanobacteriota</taxon>
        <taxon>Cyanophyceae</taxon>
        <taxon>Synechococcales</taxon>
        <taxon>Prochlorococcaceae</taxon>
        <taxon>Prochlorococcus</taxon>
    </lineage>
</organism>
<accession>Q318K6</accession>
<keyword id="KW-0687">Ribonucleoprotein</keyword>
<keyword id="KW-0689">Ribosomal protein</keyword>
<keyword id="KW-0694">RNA-binding</keyword>
<keyword id="KW-0699">rRNA-binding</keyword>
<feature type="chain" id="PRO_0000230416" description="Small ribosomal subunit protein uS11">
    <location>
        <begin position="1"/>
        <end position="130"/>
    </location>
</feature>
<proteinExistence type="inferred from homology"/>
<reference key="1">
    <citation type="journal article" date="2006" name="Science">
        <title>Genomic islands and the ecology and evolution of Prochlorococcus.</title>
        <authorList>
            <person name="Coleman M.L."/>
            <person name="Sullivan M.B."/>
            <person name="Martiny A.C."/>
            <person name="Steglich C."/>
            <person name="Barry K."/>
            <person name="Delong E.F."/>
            <person name="Chisholm S.W."/>
        </authorList>
    </citation>
    <scope>NUCLEOTIDE SEQUENCE [LARGE SCALE GENOMIC DNA]</scope>
    <source>
        <strain>MIT 9312</strain>
    </source>
</reference>
<name>RS11_PROM9</name>